<protein>
    <recommendedName>
        <fullName evidence="1">Small ribosomal subunit protein bS20</fullName>
    </recommendedName>
    <alternativeName>
        <fullName evidence="2">30S ribosomal protein S20</fullName>
    </alternativeName>
</protein>
<sequence length="105" mass="11770">MLLLPGSHVKIVREVNKVPNIKSAMKRVELTRIRTLRNKAIKSSVKTAIKKFRTALEQGDNHNAAVNLRQAIRAIDKAVTKGVLHPNTAARKKSSLQRYFNKTTA</sequence>
<dbReference type="EMBL" id="CP000232">
    <property type="protein sequence ID" value="ABC18907.1"/>
    <property type="molecule type" value="Genomic_DNA"/>
</dbReference>
<dbReference type="RefSeq" id="YP_429450.1">
    <property type="nucleotide sequence ID" value="NC_007644.1"/>
</dbReference>
<dbReference type="SMR" id="Q2RKY2"/>
<dbReference type="STRING" id="264732.Moth_0577"/>
<dbReference type="EnsemblBacteria" id="ABC18907">
    <property type="protein sequence ID" value="ABC18907"/>
    <property type="gene ID" value="Moth_0577"/>
</dbReference>
<dbReference type="KEGG" id="mta:Moth_0577"/>
<dbReference type="PATRIC" id="fig|264732.11.peg.621"/>
<dbReference type="eggNOG" id="COG0268">
    <property type="taxonomic scope" value="Bacteria"/>
</dbReference>
<dbReference type="HOGENOM" id="CLU_160655_1_0_9"/>
<dbReference type="OrthoDB" id="9808392at2"/>
<dbReference type="GO" id="GO:0005829">
    <property type="term" value="C:cytosol"/>
    <property type="evidence" value="ECO:0007669"/>
    <property type="project" value="TreeGrafter"/>
</dbReference>
<dbReference type="GO" id="GO:0015935">
    <property type="term" value="C:small ribosomal subunit"/>
    <property type="evidence" value="ECO:0007669"/>
    <property type="project" value="TreeGrafter"/>
</dbReference>
<dbReference type="GO" id="GO:0070181">
    <property type="term" value="F:small ribosomal subunit rRNA binding"/>
    <property type="evidence" value="ECO:0007669"/>
    <property type="project" value="TreeGrafter"/>
</dbReference>
<dbReference type="GO" id="GO:0003735">
    <property type="term" value="F:structural constituent of ribosome"/>
    <property type="evidence" value="ECO:0007669"/>
    <property type="project" value="InterPro"/>
</dbReference>
<dbReference type="GO" id="GO:0006412">
    <property type="term" value="P:translation"/>
    <property type="evidence" value="ECO:0007669"/>
    <property type="project" value="UniProtKB-UniRule"/>
</dbReference>
<dbReference type="FunFam" id="1.20.58.110:FF:000001">
    <property type="entry name" value="30S ribosomal protein S20"/>
    <property type="match status" value="1"/>
</dbReference>
<dbReference type="Gene3D" id="1.20.58.110">
    <property type="entry name" value="Ribosomal protein S20"/>
    <property type="match status" value="1"/>
</dbReference>
<dbReference type="HAMAP" id="MF_00500">
    <property type="entry name" value="Ribosomal_bS20"/>
    <property type="match status" value="1"/>
</dbReference>
<dbReference type="InterPro" id="IPR002583">
    <property type="entry name" value="Ribosomal_bS20"/>
</dbReference>
<dbReference type="InterPro" id="IPR036510">
    <property type="entry name" value="Ribosomal_bS20_sf"/>
</dbReference>
<dbReference type="NCBIfam" id="TIGR00029">
    <property type="entry name" value="S20"/>
    <property type="match status" value="1"/>
</dbReference>
<dbReference type="PANTHER" id="PTHR33398">
    <property type="entry name" value="30S RIBOSOMAL PROTEIN S20"/>
    <property type="match status" value="1"/>
</dbReference>
<dbReference type="PANTHER" id="PTHR33398:SF1">
    <property type="entry name" value="SMALL RIBOSOMAL SUBUNIT PROTEIN BS20C"/>
    <property type="match status" value="1"/>
</dbReference>
<dbReference type="Pfam" id="PF01649">
    <property type="entry name" value="Ribosomal_S20p"/>
    <property type="match status" value="1"/>
</dbReference>
<dbReference type="SUPFAM" id="SSF46992">
    <property type="entry name" value="Ribosomal protein S20"/>
    <property type="match status" value="1"/>
</dbReference>
<keyword id="KW-0687">Ribonucleoprotein</keyword>
<keyword id="KW-0689">Ribosomal protein</keyword>
<keyword id="KW-0694">RNA-binding</keyword>
<keyword id="KW-0699">rRNA-binding</keyword>
<name>RS20_MOOTA</name>
<reference key="1">
    <citation type="journal article" date="2008" name="Environ. Microbiol.">
        <title>The complete genome sequence of Moorella thermoacetica (f. Clostridium thermoaceticum).</title>
        <authorList>
            <person name="Pierce E."/>
            <person name="Xie G."/>
            <person name="Barabote R.D."/>
            <person name="Saunders E."/>
            <person name="Han C.S."/>
            <person name="Detter J.C."/>
            <person name="Richardson P."/>
            <person name="Brettin T.S."/>
            <person name="Das A."/>
            <person name="Ljungdahl L.G."/>
            <person name="Ragsdale S.W."/>
        </authorList>
    </citation>
    <scope>NUCLEOTIDE SEQUENCE [LARGE SCALE GENOMIC DNA]</scope>
    <source>
        <strain>ATCC 39073 / JCM 9320</strain>
    </source>
</reference>
<feature type="chain" id="PRO_0000236439" description="Small ribosomal subunit protein bS20">
    <location>
        <begin position="1"/>
        <end position="105"/>
    </location>
</feature>
<proteinExistence type="inferred from homology"/>
<evidence type="ECO:0000255" key="1">
    <source>
        <dbReference type="HAMAP-Rule" id="MF_00500"/>
    </source>
</evidence>
<evidence type="ECO:0000305" key="2"/>
<accession>Q2RKY2</accession>
<comment type="function">
    <text evidence="1">Binds directly to 16S ribosomal RNA.</text>
</comment>
<comment type="similarity">
    <text evidence="1">Belongs to the bacterial ribosomal protein bS20 family.</text>
</comment>
<organism>
    <name type="scientific">Moorella thermoacetica (strain ATCC 39073 / JCM 9320)</name>
    <dbReference type="NCBI Taxonomy" id="264732"/>
    <lineage>
        <taxon>Bacteria</taxon>
        <taxon>Bacillati</taxon>
        <taxon>Bacillota</taxon>
        <taxon>Clostridia</taxon>
        <taxon>Moorellales</taxon>
        <taxon>Moorellaceae</taxon>
        <taxon>Moorella</taxon>
    </lineage>
</organism>
<gene>
    <name evidence="1" type="primary">rpsT</name>
    <name type="ordered locus">Moth_0577</name>
</gene>